<feature type="chain" id="PRO_0000072056" description="Stage II sporulation protein B">
    <location>
        <begin position="1"/>
        <end position="332"/>
    </location>
</feature>
<feature type="transmembrane region" description="Helical" evidence="1">
    <location>
        <begin position="112"/>
        <end position="132"/>
    </location>
</feature>
<feature type="domain" description="SPOR" evidence="2">
    <location>
        <begin position="175"/>
        <end position="250"/>
    </location>
</feature>
<feature type="region of interest" description="Disordered" evidence="3">
    <location>
        <begin position="1"/>
        <end position="71"/>
    </location>
</feature>
<feature type="region of interest" description="Disordered" evidence="3">
    <location>
        <begin position="139"/>
        <end position="174"/>
    </location>
</feature>
<feature type="compositionally biased region" description="Basic residues" evidence="3">
    <location>
        <begin position="1"/>
        <end position="10"/>
    </location>
</feature>
<feature type="compositionally biased region" description="Basic and acidic residues" evidence="3">
    <location>
        <begin position="11"/>
        <end position="27"/>
    </location>
</feature>
<feature type="compositionally biased region" description="Polar residues" evidence="3">
    <location>
        <begin position="161"/>
        <end position="174"/>
    </location>
</feature>
<reference key="1">
    <citation type="journal article" date="1993" name="J. Bacteriol.">
        <title>Sporulation gene spoIIB from Bacillus subtilis.</title>
        <authorList>
            <person name="Margolis P.S."/>
            <person name="Driks A."/>
            <person name="Losick R."/>
        </authorList>
    </citation>
    <scope>NUCLEOTIDE SEQUENCE [GENOMIC DNA]</scope>
    <scope>INDUCTION</scope>
    <scope>DISRUPTION PHENOTYPE</scope>
    <source>
        <strain>168 / PY79</strain>
    </source>
</reference>
<reference key="2">
    <citation type="journal article" date="1997" name="Nature">
        <title>The complete genome sequence of the Gram-positive bacterium Bacillus subtilis.</title>
        <authorList>
            <person name="Kunst F."/>
            <person name="Ogasawara N."/>
            <person name="Moszer I."/>
            <person name="Albertini A.M."/>
            <person name="Alloni G."/>
            <person name="Azevedo V."/>
            <person name="Bertero M.G."/>
            <person name="Bessieres P."/>
            <person name="Bolotin A."/>
            <person name="Borchert S."/>
            <person name="Borriss R."/>
            <person name="Boursier L."/>
            <person name="Brans A."/>
            <person name="Braun M."/>
            <person name="Brignell S.C."/>
            <person name="Bron S."/>
            <person name="Brouillet S."/>
            <person name="Bruschi C.V."/>
            <person name="Caldwell B."/>
            <person name="Capuano V."/>
            <person name="Carter N.M."/>
            <person name="Choi S.-K."/>
            <person name="Codani J.-J."/>
            <person name="Connerton I.F."/>
            <person name="Cummings N.J."/>
            <person name="Daniel R.A."/>
            <person name="Denizot F."/>
            <person name="Devine K.M."/>
            <person name="Duesterhoeft A."/>
            <person name="Ehrlich S.D."/>
            <person name="Emmerson P.T."/>
            <person name="Entian K.-D."/>
            <person name="Errington J."/>
            <person name="Fabret C."/>
            <person name="Ferrari E."/>
            <person name="Foulger D."/>
            <person name="Fritz C."/>
            <person name="Fujita M."/>
            <person name="Fujita Y."/>
            <person name="Fuma S."/>
            <person name="Galizzi A."/>
            <person name="Galleron N."/>
            <person name="Ghim S.-Y."/>
            <person name="Glaser P."/>
            <person name="Goffeau A."/>
            <person name="Golightly E.J."/>
            <person name="Grandi G."/>
            <person name="Guiseppi G."/>
            <person name="Guy B.J."/>
            <person name="Haga K."/>
            <person name="Haiech J."/>
            <person name="Harwood C.R."/>
            <person name="Henaut A."/>
            <person name="Hilbert H."/>
            <person name="Holsappel S."/>
            <person name="Hosono S."/>
            <person name="Hullo M.-F."/>
            <person name="Itaya M."/>
            <person name="Jones L.-M."/>
            <person name="Joris B."/>
            <person name="Karamata D."/>
            <person name="Kasahara Y."/>
            <person name="Klaerr-Blanchard M."/>
            <person name="Klein C."/>
            <person name="Kobayashi Y."/>
            <person name="Koetter P."/>
            <person name="Koningstein G."/>
            <person name="Krogh S."/>
            <person name="Kumano M."/>
            <person name="Kurita K."/>
            <person name="Lapidus A."/>
            <person name="Lardinois S."/>
            <person name="Lauber J."/>
            <person name="Lazarevic V."/>
            <person name="Lee S.-M."/>
            <person name="Levine A."/>
            <person name="Liu H."/>
            <person name="Masuda S."/>
            <person name="Mauel C."/>
            <person name="Medigue C."/>
            <person name="Medina N."/>
            <person name="Mellado R.P."/>
            <person name="Mizuno M."/>
            <person name="Moestl D."/>
            <person name="Nakai S."/>
            <person name="Noback M."/>
            <person name="Noone D."/>
            <person name="O'Reilly M."/>
            <person name="Ogawa K."/>
            <person name="Ogiwara A."/>
            <person name="Oudega B."/>
            <person name="Park S.-H."/>
            <person name="Parro V."/>
            <person name="Pohl T.M."/>
            <person name="Portetelle D."/>
            <person name="Porwollik S."/>
            <person name="Prescott A.M."/>
            <person name="Presecan E."/>
            <person name="Pujic P."/>
            <person name="Purnelle B."/>
            <person name="Rapoport G."/>
            <person name="Rey M."/>
            <person name="Reynolds S."/>
            <person name="Rieger M."/>
            <person name="Rivolta C."/>
            <person name="Rocha E."/>
            <person name="Roche B."/>
            <person name="Rose M."/>
            <person name="Sadaie Y."/>
            <person name="Sato T."/>
            <person name="Scanlan E."/>
            <person name="Schleich S."/>
            <person name="Schroeter R."/>
            <person name="Scoffone F."/>
            <person name="Sekiguchi J."/>
            <person name="Sekowska A."/>
            <person name="Seror S.J."/>
            <person name="Serror P."/>
            <person name="Shin B.-S."/>
            <person name="Soldo B."/>
            <person name="Sorokin A."/>
            <person name="Tacconi E."/>
            <person name="Takagi T."/>
            <person name="Takahashi H."/>
            <person name="Takemaru K."/>
            <person name="Takeuchi M."/>
            <person name="Tamakoshi A."/>
            <person name="Tanaka T."/>
            <person name="Terpstra P."/>
            <person name="Tognoni A."/>
            <person name="Tosato V."/>
            <person name="Uchiyama S."/>
            <person name="Vandenbol M."/>
            <person name="Vannier F."/>
            <person name="Vassarotti A."/>
            <person name="Viari A."/>
            <person name="Wambutt R."/>
            <person name="Wedler E."/>
            <person name="Wedler H."/>
            <person name="Weitzenegger T."/>
            <person name="Winters P."/>
            <person name="Wipat A."/>
            <person name="Yamamoto H."/>
            <person name="Yamane K."/>
            <person name="Yasumoto K."/>
            <person name="Yata K."/>
            <person name="Yoshida K."/>
            <person name="Yoshikawa H.-F."/>
            <person name="Zumstein E."/>
            <person name="Yoshikawa H."/>
            <person name="Danchin A."/>
        </authorList>
    </citation>
    <scope>NUCLEOTIDE SEQUENCE [LARGE SCALE GENOMIC DNA]</scope>
    <source>
        <strain>168</strain>
    </source>
</reference>
<reference key="3">
    <citation type="journal article" date="2000" name="J. Bacteriol.">
        <title>SpoIIB localizes to active sites of septal biogenesis and spatially regulates septal thinning during engulfment in bacillus subtilis.</title>
        <authorList>
            <person name="Perez A.R."/>
            <person name="Abanes-De Mello A."/>
            <person name="Pogliano K."/>
        </authorList>
    </citation>
    <scope>FUNCTION</scope>
    <scope>ACTIVITY REGULATION</scope>
    <scope>SUBCELLULAR LOCATION</scope>
    <scope>DISRUPTION PHENOTYPE</scope>
    <source>
        <strain>168 / PY79</strain>
    </source>
</reference>
<name>SP2B_BACSU</name>
<organism>
    <name type="scientific">Bacillus subtilis (strain 168)</name>
    <dbReference type="NCBI Taxonomy" id="224308"/>
    <lineage>
        <taxon>Bacteria</taxon>
        <taxon>Bacillati</taxon>
        <taxon>Bacillota</taxon>
        <taxon>Bacilli</taxon>
        <taxon>Bacillales</taxon>
        <taxon>Bacillaceae</taxon>
        <taxon>Bacillus</taxon>
    </lineage>
</organism>
<evidence type="ECO:0000255" key="1"/>
<evidence type="ECO:0000255" key="2">
    <source>
        <dbReference type="PROSITE-ProRule" id="PRU01061"/>
    </source>
</evidence>
<evidence type="ECO:0000256" key="3">
    <source>
        <dbReference type="SAM" id="MobiDB-lite"/>
    </source>
</evidence>
<evidence type="ECO:0000269" key="4">
    <source>
    </source>
</evidence>
<evidence type="ECO:0000269" key="5">
    <source>
    </source>
</evidence>
<evidence type="ECO:0000303" key="6">
    <source>
    </source>
</evidence>
<evidence type="ECO:0000305" key="7"/>
<sequence length="332" mass="35923">MKKRKNKKNSKAAEKALKVTINGKEETVYEQETPETEANKSMTFSNWEEKRQAEQEVAASQEHPDEDEFNWDSEEDKVFKEDPKVVPPFQKKKTKLYAKGKTGAAKPVKRVAATIAFAAVIGTGLGLFALNISGNKEASAPASLEDSLGSQTAKAGDTSADKQTSGAEKQAAQTEGTYKTYAVQAGKFSNEKGAETLTEQLTEKGYSAVSLSKDDGYTYVIAGLASEKEVSQQLGQVLIDSDFEAWGGKELSLSIESDMTDSFKETAELAAKAILDEDITKASVEKIEKSLGETKASETGEKKAILQALKELEDPSAEAGWKAQQELLAVVK</sequence>
<gene>
    <name evidence="6" type="primary">spoIIB</name>
    <name type="ordered locus">BSU28060</name>
</gene>
<comment type="function">
    <text evidence="4">Facilitates the rapid and spatially regulated dissolution of septal peptidoglycan.</text>
</comment>
<comment type="activity regulation">
    <text evidence="4">Appears to be degraded early in engulfment, in correlation with its loss from polar septa.</text>
</comment>
<comment type="subcellular location">
    <subcellularLocation>
        <location evidence="7">Cell membrane</location>
        <topology evidence="1">Single-pass membrane protein</topology>
    </subcellularLocation>
    <text evidence="4">Colocalizes with FtsZ at sites of polar septation, either shortly before or after the onset of septal biogenesis.</text>
</comment>
<comment type="induction">
    <text evidence="5">Transcription is under sporulation control.</text>
</comment>
<comment type="disruption phenotype">
    <text evidence="4 5">Deletion of the gene causes little impairment of spore formation (PubMed:8419299). Mutant sporangia display a transient engulfment defect in which the forespore pushes through the septum and bulges into the mother cell (PubMed:10648537). Ultimately, however, the mutant is able to complete engulfment (PubMed:10648537). A spoIIB spoVG double mutant is blocked at the stage of sporulation septum formation and displays a strong impairment of engulfment (PubMed:10648537, PubMed:8419299).</text>
</comment>
<protein>
    <recommendedName>
        <fullName>Stage II sporulation protein B</fullName>
    </recommendedName>
</protein>
<accession>P37575</accession>
<proteinExistence type="evidence at transcript level"/>
<keyword id="KW-1003">Cell membrane</keyword>
<keyword id="KW-0472">Membrane</keyword>
<keyword id="KW-1185">Reference proteome</keyword>
<keyword id="KW-0749">Sporulation</keyword>
<keyword id="KW-0812">Transmembrane</keyword>
<keyword id="KW-1133">Transmembrane helix</keyword>
<dbReference type="EMBL" id="L04519">
    <property type="protein sequence ID" value="AAB59026.1"/>
    <property type="molecule type" value="Genomic_DNA"/>
</dbReference>
<dbReference type="EMBL" id="AL009126">
    <property type="protein sequence ID" value="CAB14766.1"/>
    <property type="molecule type" value="Genomic_DNA"/>
</dbReference>
<dbReference type="PIR" id="C40646">
    <property type="entry name" value="C40646"/>
</dbReference>
<dbReference type="RefSeq" id="NP_390684.1">
    <property type="nucleotide sequence ID" value="NC_000964.3"/>
</dbReference>
<dbReference type="RefSeq" id="WP_004398782.1">
    <property type="nucleotide sequence ID" value="NZ_OZ025638.1"/>
</dbReference>
<dbReference type="SMR" id="P37575"/>
<dbReference type="FunCoup" id="P37575">
    <property type="interactions" value="7"/>
</dbReference>
<dbReference type="STRING" id="224308.BSU28060"/>
<dbReference type="PaxDb" id="224308-BSU28060"/>
<dbReference type="EnsemblBacteria" id="CAB14766">
    <property type="protein sequence ID" value="CAB14766"/>
    <property type="gene ID" value="BSU_28060"/>
</dbReference>
<dbReference type="GeneID" id="937497"/>
<dbReference type="KEGG" id="bsu:BSU28060"/>
<dbReference type="PATRIC" id="fig|224308.179.peg.3048"/>
<dbReference type="eggNOG" id="ENOG5030CIU">
    <property type="taxonomic scope" value="Bacteria"/>
</dbReference>
<dbReference type="InParanoid" id="P37575"/>
<dbReference type="OrthoDB" id="2938787at2"/>
<dbReference type="BioCyc" id="BSUB:BSU28060-MONOMER"/>
<dbReference type="Proteomes" id="UP000001570">
    <property type="component" value="Chromosome"/>
</dbReference>
<dbReference type="GO" id="GO:0005886">
    <property type="term" value="C:plasma membrane"/>
    <property type="evidence" value="ECO:0007669"/>
    <property type="project" value="UniProtKB-SubCell"/>
</dbReference>
<dbReference type="GO" id="GO:0042834">
    <property type="term" value="F:peptidoglycan binding"/>
    <property type="evidence" value="ECO:0007669"/>
    <property type="project" value="InterPro"/>
</dbReference>
<dbReference type="GO" id="GO:0030435">
    <property type="term" value="P:sporulation resulting in formation of a cellular spore"/>
    <property type="evidence" value="ECO:0007669"/>
    <property type="project" value="UniProtKB-KW"/>
</dbReference>
<dbReference type="Gene3D" id="3.30.70.1070">
    <property type="entry name" value="Sporulation related repeat"/>
    <property type="match status" value="1"/>
</dbReference>
<dbReference type="InterPro" id="IPR007730">
    <property type="entry name" value="SPOR-like_dom"/>
</dbReference>
<dbReference type="InterPro" id="IPR036680">
    <property type="entry name" value="SPOR-like_sf"/>
</dbReference>
<dbReference type="Pfam" id="PF05036">
    <property type="entry name" value="SPOR"/>
    <property type="match status" value="1"/>
</dbReference>
<dbReference type="SUPFAM" id="SSF110997">
    <property type="entry name" value="Sporulation related repeat"/>
    <property type="match status" value="1"/>
</dbReference>
<dbReference type="PROSITE" id="PS51724">
    <property type="entry name" value="SPOR"/>
    <property type="match status" value="1"/>
</dbReference>